<accession>Q9CZJ0</accession>
<feature type="chain" id="PRO_0000053406" description="Metallophosphoesterase MPPED2">
    <location>
        <begin position="1"/>
        <end position="294"/>
    </location>
</feature>
<feature type="binding site" evidence="1">
    <location>
        <position position="65"/>
    </location>
    <ligand>
        <name>Mn(2+)</name>
        <dbReference type="ChEBI" id="CHEBI:29035"/>
        <label>1</label>
    </ligand>
</feature>
<feature type="binding site" evidence="1">
    <location>
        <position position="67"/>
    </location>
    <ligand>
        <name>Mn(2+)</name>
        <dbReference type="ChEBI" id="CHEBI:29035"/>
        <label>1</label>
    </ligand>
</feature>
<feature type="binding site" evidence="1">
    <location>
        <position position="86"/>
    </location>
    <ligand>
        <name>Mn(2+)</name>
        <dbReference type="ChEBI" id="CHEBI:29035"/>
        <label>1</label>
    </ligand>
</feature>
<feature type="binding site" evidence="1">
    <location>
        <position position="86"/>
    </location>
    <ligand>
        <name>Mn(2+)</name>
        <dbReference type="ChEBI" id="CHEBI:29035"/>
        <label>2</label>
    </ligand>
</feature>
<feature type="binding site" evidence="1">
    <location>
        <begin position="117"/>
        <end position="118"/>
    </location>
    <ligand>
        <name>GMP</name>
        <dbReference type="ChEBI" id="CHEBI:58115"/>
    </ligand>
</feature>
<feature type="binding site" evidence="1">
    <location>
        <position position="117"/>
    </location>
    <ligand>
        <name>Mn(2+)</name>
        <dbReference type="ChEBI" id="CHEBI:29035"/>
        <label>2</label>
    </ligand>
</feature>
<feature type="binding site" evidence="1">
    <location>
        <position position="213"/>
    </location>
    <ligand>
        <name>Mn(2+)</name>
        <dbReference type="ChEBI" id="CHEBI:29035"/>
        <label>2</label>
    </ligand>
</feature>
<feature type="binding site" evidence="1">
    <location>
        <begin position="225"/>
        <end position="226"/>
    </location>
    <ligand>
        <name>GMP</name>
        <dbReference type="ChEBI" id="CHEBI:58115"/>
    </ligand>
</feature>
<feature type="binding site" evidence="1">
    <location>
        <begin position="252"/>
        <end position="255"/>
    </location>
    <ligand>
        <name>GMP</name>
        <dbReference type="ChEBI" id="CHEBI:58115"/>
    </ligand>
</feature>
<feature type="binding site" evidence="1">
    <location>
        <position position="254"/>
    </location>
    <ligand>
        <name>Mn(2+)</name>
        <dbReference type="ChEBI" id="CHEBI:29035"/>
        <label>1</label>
    </ligand>
</feature>
<proteinExistence type="evidence at transcript level"/>
<sequence>MAHGIPSQGKVTITVDEYSSNPTQAFTHYNINQSRFQPPHVHMVDPIPYDTPKPAGHTRFVCISDTHSRTDGIQMPYGDILLHTGDFTELGLPSEVKKFNDWLGNLPYEYKIVIAGNHELTFDKEFMADLVKQDYYRFPSVSKLKPEDFDNVQSLLTNSIYLQDSEVTVKGFRIYGAPWTPWFNGWGFNLPRGQSLLDKWNLIPEGIDILMTHGPPLGFRDWVPKELQRVGCVELLNTVQRRIRPKLHVFGGIHEGYGIMTDGYTTYINASTCTVSFQPTNPPIIFDLPNPQGS</sequence>
<organism>
    <name type="scientific">Mus musculus</name>
    <name type="common">Mouse</name>
    <dbReference type="NCBI Taxonomy" id="10090"/>
    <lineage>
        <taxon>Eukaryota</taxon>
        <taxon>Metazoa</taxon>
        <taxon>Chordata</taxon>
        <taxon>Craniata</taxon>
        <taxon>Vertebrata</taxon>
        <taxon>Euteleostomi</taxon>
        <taxon>Mammalia</taxon>
        <taxon>Eutheria</taxon>
        <taxon>Euarchontoglires</taxon>
        <taxon>Glires</taxon>
        <taxon>Rodentia</taxon>
        <taxon>Myomorpha</taxon>
        <taxon>Muroidea</taxon>
        <taxon>Muridae</taxon>
        <taxon>Murinae</taxon>
        <taxon>Mus</taxon>
        <taxon>Mus</taxon>
    </lineage>
</organism>
<reference key="1">
    <citation type="journal article" date="2005" name="Science">
        <title>The transcriptional landscape of the mammalian genome.</title>
        <authorList>
            <person name="Carninci P."/>
            <person name="Kasukawa T."/>
            <person name="Katayama S."/>
            <person name="Gough J."/>
            <person name="Frith M.C."/>
            <person name="Maeda N."/>
            <person name="Oyama R."/>
            <person name="Ravasi T."/>
            <person name="Lenhard B."/>
            <person name="Wells C."/>
            <person name="Kodzius R."/>
            <person name="Shimokawa K."/>
            <person name="Bajic V.B."/>
            <person name="Brenner S.E."/>
            <person name="Batalov S."/>
            <person name="Forrest A.R."/>
            <person name="Zavolan M."/>
            <person name="Davis M.J."/>
            <person name="Wilming L.G."/>
            <person name="Aidinis V."/>
            <person name="Allen J.E."/>
            <person name="Ambesi-Impiombato A."/>
            <person name="Apweiler R."/>
            <person name="Aturaliya R.N."/>
            <person name="Bailey T.L."/>
            <person name="Bansal M."/>
            <person name="Baxter L."/>
            <person name="Beisel K.W."/>
            <person name="Bersano T."/>
            <person name="Bono H."/>
            <person name="Chalk A.M."/>
            <person name="Chiu K.P."/>
            <person name="Choudhary V."/>
            <person name="Christoffels A."/>
            <person name="Clutterbuck D.R."/>
            <person name="Crowe M.L."/>
            <person name="Dalla E."/>
            <person name="Dalrymple B.P."/>
            <person name="de Bono B."/>
            <person name="Della Gatta G."/>
            <person name="di Bernardo D."/>
            <person name="Down T."/>
            <person name="Engstrom P."/>
            <person name="Fagiolini M."/>
            <person name="Faulkner G."/>
            <person name="Fletcher C.F."/>
            <person name="Fukushima T."/>
            <person name="Furuno M."/>
            <person name="Futaki S."/>
            <person name="Gariboldi M."/>
            <person name="Georgii-Hemming P."/>
            <person name="Gingeras T.R."/>
            <person name="Gojobori T."/>
            <person name="Green R.E."/>
            <person name="Gustincich S."/>
            <person name="Harbers M."/>
            <person name="Hayashi Y."/>
            <person name="Hensch T.K."/>
            <person name="Hirokawa N."/>
            <person name="Hill D."/>
            <person name="Huminiecki L."/>
            <person name="Iacono M."/>
            <person name="Ikeo K."/>
            <person name="Iwama A."/>
            <person name="Ishikawa T."/>
            <person name="Jakt M."/>
            <person name="Kanapin A."/>
            <person name="Katoh M."/>
            <person name="Kawasawa Y."/>
            <person name="Kelso J."/>
            <person name="Kitamura H."/>
            <person name="Kitano H."/>
            <person name="Kollias G."/>
            <person name="Krishnan S.P."/>
            <person name="Kruger A."/>
            <person name="Kummerfeld S.K."/>
            <person name="Kurochkin I.V."/>
            <person name="Lareau L.F."/>
            <person name="Lazarevic D."/>
            <person name="Lipovich L."/>
            <person name="Liu J."/>
            <person name="Liuni S."/>
            <person name="McWilliam S."/>
            <person name="Madan Babu M."/>
            <person name="Madera M."/>
            <person name="Marchionni L."/>
            <person name="Matsuda H."/>
            <person name="Matsuzawa S."/>
            <person name="Miki H."/>
            <person name="Mignone F."/>
            <person name="Miyake S."/>
            <person name="Morris K."/>
            <person name="Mottagui-Tabar S."/>
            <person name="Mulder N."/>
            <person name="Nakano N."/>
            <person name="Nakauchi H."/>
            <person name="Ng P."/>
            <person name="Nilsson R."/>
            <person name="Nishiguchi S."/>
            <person name="Nishikawa S."/>
            <person name="Nori F."/>
            <person name="Ohara O."/>
            <person name="Okazaki Y."/>
            <person name="Orlando V."/>
            <person name="Pang K.C."/>
            <person name="Pavan W.J."/>
            <person name="Pavesi G."/>
            <person name="Pesole G."/>
            <person name="Petrovsky N."/>
            <person name="Piazza S."/>
            <person name="Reed J."/>
            <person name="Reid J.F."/>
            <person name="Ring B.Z."/>
            <person name="Ringwald M."/>
            <person name="Rost B."/>
            <person name="Ruan Y."/>
            <person name="Salzberg S.L."/>
            <person name="Sandelin A."/>
            <person name="Schneider C."/>
            <person name="Schoenbach C."/>
            <person name="Sekiguchi K."/>
            <person name="Semple C.A."/>
            <person name="Seno S."/>
            <person name="Sessa L."/>
            <person name="Sheng Y."/>
            <person name="Shibata Y."/>
            <person name="Shimada H."/>
            <person name="Shimada K."/>
            <person name="Silva D."/>
            <person name="Sinclair B."/>
            <person name="Sperling S."/>
            <person name="Stupka E."/>
            <person name="Sugiura K."/>
            <person name="Sultana R."/>
            <person name="Takenaka Y."/>
            <person name="Taki K."/>
            <person name="Tammoja K."/>
            <person name="Tan S.L."/>
            <person name="Tang S."/>
            <person name="Taylor M.S."/>
            <person name="Tegner J."/>
            <person name="Teichmann S.A."/>
            <person name="Ueda H.R."/>
            <person name="van Nimwegen E."/>
            <person name="Verardo R."/>
            <person name="Wei C.L."/>
            <person name="Yagi K."/>
            <person name="Yamanishi H."/>
            <person name="Zabarovsky E."/>
            <person name="Zhu S."/>
            <person name="Zimmer A."/>
            <person name="Hide W."/>
            <person name="Bult C."/>
            <person name="Grimmond S.M."/>
            <person name="Teasdale R.D."/>
            <person name="Liu E.T."/>
            <person name="Brusic V."/>
            <person name="Quackenbush J."/>
            <person name="Wahlestedt C."/>
            <person name="Mattick J.S."/>
            <person name="Hume D.A."/>
            <person name="Kai C."/>
            <person name="Sasaki D."/>
            <person name="Tomaru Y."/>
            <person name="Fukuda S."/>
            <person name="Kanamori-Katayama M."/>
            <person name="Suzuki M."/>
            <person name="Aoki J."/>
            <person name="Arakawa T."/>
            <person name="Iida J."/>
            <person name="Imamura K."/>
            <person name="Itoh M."/>
            <person name="Kato T."/>
            <person name="Kawaji H."/>
            <person name="Kawagashira N."/>
            <person name="Kawashima T."/>
            <person name="Kojima M."/>
            <person name="Kondo S."/>
            <person name="Konno H."/>
            <person name="Nakano K."/>
            <person name="Ninomiya N."/>
            <person name="Nishio T."/>
            <person name="Okada M."/>
            <person name="Plessy C."/>
            <person name="Shibata K."/>
            <person name="Shiraki T."/>
            <person name="Suzuki S."/>
            <person name="Tagami M."/>
            <person name="Waki K."/>
            <person name="Watahiki A."/>
            <person name="Okamura-Oho Y."/>
            <person name="Suzuki H."/>
            <person name="Kawai J."/>
            <person name="Hayashizaki Y."/>
        </authorList>
    </citation>
    <scope>NUCLEOTIDE SEQUENCE [LARGE SCALE MRNA]</scope>
    <source>
        <strain>C57BL/6J</strain>
        <tissue>Embryo</tissue>
    </source>
</reference>
<name>MPPD2_MOUSE</name>
<protein>
    <recommendedName>
        <fullName>Metallophosphoesterase MPPED2</fullName>
        <ecNumber evidence="1">3.1.-.-</ecNumber>
    </recommendedName>
    <alternativeName>
        <fullName>Metallophosphoesterase domain-containing protein 2</fullName>
    </alternativeName>
</protein>
<dbReference type="EC" id="3.1.-.-" evidence="1"/>
<dbReference type="EMBL" id="AK012553">
    <property type="protein sequence ID" value="BAB28313.1"/>
    <property type="molecule type" value="mRNA"/>
</dbReference>
<dbReference type="CCDS" id="CCDS50654.1"/>
<dbReference type="RefSeq" id="NP_001137155.1">
    <property type="nucleotide sequence ID" value="NM_001143683.2"/>
</dbReference>
<dbReference type="RefSeq" id="NP_001343483.1">
    <property type="nucleotide sequence ID" value="NM_001356554.1"/>
</dbReference>
<dbReference type="RefSeq" id="NP_084113.1">
    <property type="nucleotide sequence ID" value="NM_029837.1"/>
</dbReference>
<dbReference type="RefSeq" id="XP_011238143.1">
    <property type="nucleotide sequence ID" value="XM_011239841.1"/>
</dbReference>
<dbReference type="SMR" id="Q9CZJ0"/>
<dbReference type="FunCoup" id="Q9CZJ0">
    <property type="interactions" value="58"/>
</dbReference>
<dbReference type="STRING" id="10090.ENSMUSP00000106692"/>
<dbReference type="iPTMnet" id="Q9CZJ0"/>
<dbReference type="PhosphoSitePlus" id="Q9CZJ0"/>
<dbReference type="PaxDb" id="10090-ENSMUSP00000106692"/>
<dbReference type="ProteomicsDB" id="291438"/>
<dbReference type="Antibodypedia" id="12780">
    <property type="antibodies" value="191 antibodies from 23 providers"/>
</dbReference>
<dbReference type="Ensembl" id="ENSMUST00000016530.14">
    <property type="protein sequence ID" value="ENSMUSP00000016530.8"/>
    <property type="gene ID" value="ENSMUSG00000016386.16"/>
</dbReference>
<dbReference type="Ensembl" id="ENSMUST00000111063.8">
    <property type="protein sequence ID" value="ENSMUSP00000106692.2"/>
    <property type="gene ID" value="ENSMUSG00000016386.16"/>
</dbReference>
<dbReference type="GeneID" id="77015"/>
<dbReference type="KEGG" id="mmu:77015"/>
<dbReference type="UCSC" id="uc008llm.2">
    <property type="organism name" value="mouse"/>
</dbReference>
<dbReference type="AGR" id="MGI:1924265"/>
<dbReference type="CTD" id="744"/>
<dbReference type="MGI" id="MGI:1924265">
    <property type="gene designation" value="Mpped2"/>
</dbReference>
<dbReference type="VEuPathDB" id="HostDB:ENSMUSG00000016386"/>
<dbReference type="eggNOG" id="KOG3947">
    <property type="taxonomic scope" value="Eukaryota"/>
</dbReference>
<dbReference type="GeneTree" id="ENSGT00390000007681"/>
<dbReference type="InParanoid" id="Q9CZJ0"/>
<dbReference type="OMA" id="HTPPYGI"/>
<dbReference type="OrthoDB" id="630188at2759"/>
<dbReference type="PhylomeDB" id="Q9CZJ0"/>
<dbReference type="TreeFam" id="TF314305"/>
<dbReference type="BioGRID-ORCS" id="77015">
    <property type="hits" value="3 hits in 77 CRISPR screens"/>
</dbReference>
<dbReference type="ChiTaRS" id="Mpped2">
    <property type="organism name" value="mouse"/>
</dbReference>
<dbReference type="PRO" id="PR:Q9CZJ0"/>
<dbReference type="Proteomes" id="UP000000589">
    <property type="component" value="Chromosome 2"/>
</dbReference>
<dbReference type="RNAct" id="Q9CZJ0">
    <property type="molecule type" value="protein"/>
</dbReference>
<dbReference type="Bgee" id="ENSMUSG00000016386">
    <property type="expression patterns" value="Expressed in rostral migratory stream and 211 other cell types or tissues"/>
</dbReference>
<dbReference type="ExpressionAtlas" id="Q9CZJ0">
    <property type="expression patterns" value="baseline and differential"/>
</dbReference>
<dbReference type="GO" id="GO:0016208">
    <property type="term" value="F:AMP binding"/>
    <property type="evidence" value="ECO:0000250"/>
    <property type="project" value="UniProtKB"/>
</dbReference>
<dbReference type="GO" id="GO:0019002">
    <property type="term" value="F:GMP binding"/>
    <property type="evidence" value="ECO:0000250"/>
    <property type="project" value="UniProtKB"/>
</dbReference>
<dbReference type="GO" id="GO:0030145">
    <property type="term" value="F:manganese ion binding"/>
    <property type="evidence" value="ECO:0000250"/>
    <property type="project" value="UniProtKB"/>
</dbReference>
<dbReference type="GO" id="GO:0008081">
    <property type="term" value="F:phosphoric diester hydrolase activity"/>
    <property type="evidence" value="ECO:0000250"/>
    <property type="project" value="UniProtKB"/>
</dbReference>
<dbReference type="CDD" id="cd07379">
    <property type="entry name" value="MPP_239FB"/>
    <property type="match status" value="1"/>
</dbReference>
<dbReference type="FunFam" id="3.60.21.10:FF:000023">
    <property type="entry name" value="Metallophosphoesterase mpped2"/>
    <property type="match status" value="1"/>
</dbReference>
<dbReference type="Gene3D" id="3.60.21.10">
    <property type="match status" value="1"/>
</dbReference>
<dbReference type="InterPro" id="IPR024201">
    <property type="entry name" value="Calcineurin-like_Pesterase"/>
</dbReference>
<dbReference type="InterPro" id="IPR004843">
    <property type="entry name" value="Calcineurin-like_PHP_ApaH"/>
</dbReference>
<dbReference type="InterPro" id="IPR029052">
    <property type="entry name" value="Metallo-depent_PP-like"/>
</dbReference>
<dbReference type="InterPro" id="IPR051693">
    <property type="entry name" value="UPF0046_metallophosphoest"/>
</dbReference>
<dbReference type="PANTHER" id="PTHR12905">
    <property type="entry name" value="METALLOPHOSPHOESTERASE"/>
    <property type="match status" value="1"/>
</dbReference>
<dbReference type="PANTHER" id="PTHR12905:SF13">
    <property type="entry name" value="METALLOPHOSPHOESTERASE MPPED2"/>
    <property type="match status" value="1"/>
</dbReference>
<dbReference type="Pfam" id="PF00149">
    <property type="entry name" value="Metallophos"/>
    <property type="match status" value="1"/>
</dbReference>
<dbReference type="PIRSF" id="PIRSF035808">
    <property type="entry name" value="Pdiesterase_Brain_239"/>
    <property type="match status" value="1"/>
</dbReference>
<dbReference type="SUPFAM" id="SSF56300">
    <property type="entry name" value="Metallo-dependent phosphatases"/>
    <property type="match status" value="1"/>
</dbReference>
<comment type="function">
    <text evidence="1">Displays low metallophosphoesterase activity (in vitro). May play a role in the development of the nervous system.</text>
</comment>
<comment type="cofactor">
    <cofactor evidence="1">
        <name>Mn(2+)</name>
        <dbReference type="ChEBI" id="CHEBI:29035"/>
    </cofactor>
    <cofactor evidence="1">
        <name>Co(2+)</name>
        <dbReference type="ChEBI" id="CHEBI:48828"/>
    </cofactor>
</comment>
<comment type="activity regulation">
    <text evidence="1">Inhibited by nmolar levels of AMP and GMP.</text>
</comment>
<comment type="subunit">
    <text evidence="1">Homodimer.</text>
</comment>
<comment type="similarity">
    <text evidence="2">Belongs to the UPF0046 family.</text>
</comment>
<keyword id="KW-0170">Cobalt</keyword>
<keyword id="KW-0378">Hydrolase</keyword>
<keyword id="KW-0464">Manganese</keyword>
<keyword id="KW-0479">Metal-binding</keyword>
<keyword id="KW-0547">Nucleotide-binding</keyword>
<keyword id="KW-1185">Reference proteome</keyword>
<gene>
    <name type="primary">Mpped2</name>
</gene>
<evidence type="ECO:0000250" key="1">
    <source>
        <dbReference type="UniProtKB" id="B1WBP0"/>
    </source>
</evidence>
<evidence type="ECO:0000305" key="2"/>